<sequence length="278" mass="30619">MALKKYNPTTPGQRQLVLVDRSALYKGKPVKSLTEGKISNGGRNNTGRITVRFRGGGHKQTYRIVDFKRTKVDVPAKVERLEYDPNRTAFIALIKYEDGEQAYILAPQRLSVGDSVIAGSYVDVKPGNVMPLGNMPVGTIVHNIELKIGKGGQIARSAGTYAQLVGRDHDYVIVRLNSGEQRLVHGRCTATIGAVSNPDHMNISIGKAGRKRWLGRRPHNRGVVMNPIDHPHGGGEGRTSGGRHPVTPWGKPTKGKKTRSNKSTDKFILISRHKRKKK</sequence>
<evidence type="ECO:0000255" key="1">
    <source>
        <dbReference type="HAMAP-Rule" id="MF_01320"/>
    </source>
</evidence>
<evidence type="ECO:0000256" key="2">
    <source>
        <dbReference type="SAM" id="MobiDB-lite"/>
    </source>
</evidence>
<evidence type="ECO:0000305" key="3"/>
<comment type="function">
    <text evidence="1">One of the primary rRNA binding proteins. Required for association of the 30S and 50S subunits to form the 70S ribosome, for tRNA binding and peptide bond formation. It has been suggested to have peptidyltransferase activity; this is somewhat controversial. Makes several contacts with the 16S rRNA in the 70S ribosome.</text>
</comment>
<comment type="subunit">
    <text evidence="1">Part of the 50S ribosomal subunit. Forms a bridge to the 30S subunit in the 70S ribosome.</text>
</comment>
<comment type="similarity">
    <text evidence="1">Belongs to the universal ribosomal protein uL2 family.</text>
</comment>
<organism>
    <name type="scientific">Rhodopseudomonas palustris (strain BisB5)</name>
    <dbReference type="NCBI Taxonomy" id="316057"/>
    <lineage>
        <taxon>Bacteria</taxon>
        <taxon>Pseudomonadati</taxon>
        <taxon>Pseudomonadota</taxon>
        <taxon>Alphaproteobacteria</taxon>
        <taxon>Hyphomicrobiales</taxon>
        <taxon>Nitrobacteraceae</taxon>
        <taxon>Rhodopseudomonas</taxon>
    </lineage>
</organism>
<protein>
    <recommendedName>
        <fullName evidence="1">Large ribosomal subunit protein uL2</fullName>
    </recommendedName>
    <alternativeName>
        <fullName evidence="3">50S ribosomal protein L2</fullName>
    </alternativeName>
</protein>
<feature type="chain" id="PRO_0000310001" description="Large ribosomal subunit protein uL2">
    <location>
        <begin position="1"/>
        <end position="278"/>
    </location>
</feature>
<feature type="region of interest" description="Disordered" evidence="2">
    <location>
        <begin position="222"/>
        <end position="278"/>
    </location>
</feature>
<proteinExistence type="inferred from homology"/>
<gene>
    <name evidence="1" type="primary">rplB</name>
    <name type="ordered locus">RPD_3181</name>
</gene>
<dbReference type="EMBL" id="CP000283">
    <property type="protein sequence ID" value="ABE40407.1"/>
    <property type="molecule type" value="Genomic_DNA"/>
</dbReference>
<dbReference type="SMR" id="Q134T2"/>
<dbReference type="STRING" id="316057.RPD_3181"/>
<dbReference type="KEGG" id="rpd:RPD_3181"/>
<dbReference type="eggNOG" id="COG0090">
    <property type="taxonomic scope" value="Bacteria"/>
</dbReference>
<dbReference type="HOGENOM" id="CLU_036235_2_1_5"/>
<dbReference type="BioCyc" id="RPAL316057:RPD_RS15970-MONOMER"/>
<dbReference type="Proteomes" id="UP000001818">
    <property type="component" value="Chromosome"/>
</dbReference>
<dbReference type="GO" id="GO:0015934">
    <property type="term" value="C:large ribosomal subunit"/>
    <property type="evidence" value="ECO:0007669"/>
    <property type="project" value="InterPro"/>
</dbReference>
<dbReference type="GO" id="GO:0019843">
    <property type="term" value="F:rRNA binding"/>
    <property type="evidence" value="ECO:0007669"/>
    <property type="project" value="UniProtKB-UniRule"/>
</dbReference>
<dbReference type="GO" id="GO:0003735">
    <property type="term" value="F:structural constituent of ribosome"/>
    <property type="evidence" value="ECO:0007669"/>
    <property type="project" value="InterPro"/>
</dbReference>
<dbReference type="GO" id="GO:0016740">
    <property type="term" value="F:transferase activity"/>
    <property type="evidence" value="ECO:0007669"/>
    <property type="project" value="InterPro"/>
</dbReference>
<dbReference type="GO" id="GO:0002181">
    <property type="term" value="P:cytoplasmic translation"/>
    <property type="evidence" value="ECO:0007669"/>
    <property type="project" value="TreeGrafter"/>
</dbReference>
<dbReference type="FunFam" id="2.30.30.30:FF:000055">
    <property type="entry name" value="50S ribosomal protein L2"/>
    <property type="match status" value="1"/>
</dbReference>
<dbReference type="FunFam" id="2.40.50.140:FF:000003">
    <property type="entry name" value="50S ribosomal protein L2"/>
    <property type="match status" value="1"/>
</dbReference>
<dbReference type="FunFam" id="4.10.950.10:FF:000001">
    <property type="entry name" value="50S ribosomal protein L2"/>
    <property type="match status" value="1"/>
</dbReference>
<dbReference type="Gene3D" id="2.30.30.30">
    <property type="match status" value="1"/>
</dbReference>
<dbReference type="Gene3D" id="2.40.50.140">
    <property type="entry name" value="Nucleic acid-binding proteins"/>
    <property type="match status" value="1"/>
</dbReference>
<dbReference type="Gene3D" id="4.10.950.10">
    <property type="entry name" value="Ribosomal protein L2, domain 3"/>
    <property type="match status" value="1"/>
</dbReference>
<dbReference type="HAMAP" id="MF_01320_B">
    <property type="entry name" value="Ribosomal_uL2_B"/>
    <property type="match status" value="1"/>
</dbReference>
<dbReference type="InterPro" id="IPR012340">
    <property type="entry name" value="NA-bd_OB-fold"/>
</dbReference>
<dbReference type="InterPro" id="IPR014722">
    <property type="entry name" value="Rib_uL2_dom2"/>
</dbReference>
<dbReference type="InterPro" id="IPR002171">
    <property type="entry name" value="Ribosomal_uL2"/>
</dbReference>
<dbReference type="InterPro" id="IPR005880">
    <property type="entry name" value="Ribosomal_uL2_bac/org-type"/>
</dbReference>
<dbReference type="InterPro" id="IPR022669">
    <property type="entry name" value="Ribosomal_uL2_C"/>
</dbReference>
<dbReference type="InterPro" id="IPR022671">
    <property type="entry name" value="Ribosomal_uL2_CS"/>
</dbReference>
<dbReference type="InterPro" id="IPR014726">
    <property type="entry name" value="Ribosomal_uL2_dom3"/>
</dbReference>
<dbReference type="InterPro" id="IPR022666">
    <property type="entry name" value="Ribosomal_uL2_RNA-bd_dom"/>
</dbReference>
<dbReference type="InterPro" id="IPR008991">
    <property type="entry name" value="Translation_prot_SH3-like_sf"/>
</dbReference>
<dbReference type="NCBIfam" id="TIGR01171">
    <property type="entry name" value="rplB_bact"/>
    <property type="match status" value="1"/>
</dbReference>
<dbReference type="PANTHER" id="PTHR13691:SF5">
    <property type="entry name" value="LARGE RIBOSOMAL SUBUNIT PROTEIN UL2M"/>
    <property type="match status" value="1"/>
</dbReference>
<dbReference type="PANTHER" id="PTHR13691">
    <property type="entry name" value="RIBOSOMAL PROTEIN L2"/>
    <property type="match status" value="1"/>
</dbReference>
<dbReference type="Pfam" id="PF00181">
    <property type="entry name" value="Ribosomal_L2"/>
    <property type="match status" value="1"/>
</dbReference>
<dbReference type="Pfam" id="PF03947">
    <property type="entry name" value="Ribosomal_L2_C"/>
    <property type="match status" value="1"/>
</dbReference>
<dbReference type="PIRSF" id="PIRSF002158">
    <property type="entry name" value="Ribosomal_L2"/>
    <property type="match status" value="1"/>
</dbReference>
<dbReference type="SMART" id="SM01383">
    <property type="entry name" value="Ribosomal_L2"/>
    <property type="match status" value="1"/>
</dbReference>
<dbReference type="SMART" id="SM01382">
    <property type="entry name" value="Ribosomal_L2_C"/>
    <property type="match status" value="1"/>
</dbReference>
<dbReference type="SUPFAM" id="SSF50249">
    <property type="entry name" value="Nucleic acid-binding proteins"/>
    <property type="match status" value="1"/>
</dbReference>
<dbReference type="SUPFAM" id="SSF50104">
    <property type="entry name" value="Translation proteins SH3-like domain"/>
    <property type="match status" value="1"/>
</dbReference>
<dbReference type="PROSITE" id="PS00467">
    <property type="entry name" value="RIBOSOMAL_L2"/>
    <property type="match status" value="1"/>
</dbReference>
<reference key="1">
    <citation type="submission" date="2006-03" db="EMBL/GenBank/DDBJ databases">
        <title>Complete sequence of Rhodopseudomonas palustris BisB5.</title>
        <authorList>
            <consortium name="US DOE Joint Genome Institute"/>
            <person name="Copeland A."/>
            <person name="Lucas S."/>
            <person name="Lapidus A."/>
            <person name="Barry K."/>
            <person name="Detter J.C."/>
            <person name="Glavina del Rio T."/>
            <person name="Hammon N."/>
            <person name="Israni S."/>
            <person name="Dalin E."/>
            <person name="Tice H."/>
            <person name="Pitluck S."/>
            <person name="Chain P."/>
            <person name="Malfatti S."/>
            <person name="Shin M."/>
            <person name="Vergez L."/>
            <person name="Schmutz J."/>
            <person name="Larimer F."/>
            <person name="Land M."/>
            <person name="Hauser L."/>
            <person name="Pelletier D.A."/>
            <person name="Kyrpides N."/>
            <person name="Lykidis A."/>
            <person name="Oda Y."/>
            <person name="Harwood C.S."/>
            <person name="Richardson P."/>
        </authorList>
    </citation>
    <scope>NUCLEOTIDE SEQUENCE [LARGE SCALE GENOMIC DNA]</scope>
    <source>
        <strain>BisB5</strain>
    </source>
</reference>
<accession>Q134T2</accession>
<name>RL2_RHOPS</name>
<keyword id="KW-0687">Ribonucleoprotein</keyword>
<keyword id="KW-0689">Ribosomal protein</keyword>
<keyword id="KW-0694">RNA-binding</keyword>
<keyword id="KW-0699">rRNA-binding</keyword>